<gene>
    <name type="primary">tbx2-b</name>
</gene>
<dbReference type="EMBL" id="BC059285">
    <property type="protein sequence ID" value="AAH59285.1"/>
    <property type="status" value="ALT_INIT"/>
    <property type="molecule type" value="mRNA"/>
</dbReference>
<dbReference type="RefSeq" id="NP_001079989.1">
    <property type="nucleotide sequence ID" value="NM_001086520.1"/>
</dbReference>
<dbReference type="SMR" id="Q6PCL0"/>
<dbReference type="DNASU" id="379680"/>
<dbReference type="GeneID" id="379680"/>
<dbReference type="KEGG" id="xla:379680"/>
<dbReference type="AGR" id="Xenbase:XB-GENE-6255176"/>
<dbReference type="CTD" id="379680"/>
<dbReference type="Xenbase" id="XB-GENE-6255176">
    <property type="gene designation" value="tbx2.S"/>
</dbReference>
<dbReference type="OrthoDB" id="7442607at2759"/>
<dbReference type="Proteomes" id="UP000186698">
    <property type="component" value="Chromosome 2S"/>
</dbReference>
<dbReference type="Bgee" id="379680">
    <property type="expression patterns" value="Expressed in internal ear and 14 other cell types or tissues"/>
</dbReference>
<dbReference type="GO" id="GO:0000785">
    <property type="term" value="C:chromatin"/>
    <property type="evidence" value="ECO:0000318"/>
    <property type="project" value="GO_Central"/>
</dbReference>
<dbReference type="GO" id="GO:0005634">
    <property type="term" value="C:nucleus"/>
    <property type="evidence" value="ECO:0000318"/>
    <property type="project" value="GO_Central"/>
</dbReference>
<dbReference type="GO" id="GO:0000981">
    <property type="term" value="F:DNA-binding transcription factor activity, RNA polymerase II-specific"/>
    <property type="evidence" value="ECO:0000318"/>
    <property type="project" value="GO_Central"/>
</dbReference>
<dbReference type="GO" id="GO:0000978">
    <property type="term" value="F:RNA polymerase II cis-regulatory region sequence-specific DNA binding"/>
    <property type="evidence" value="ECO:0000318"/>
    <property type="project" value="GO_Central"/>
</dbReference>
<dbReference type="GO" id="GO:0001708">
    <property type="term" value="P:cell fate specification"/>
    <property type="evidence" value="ECO:0000318"/>
    <property type="project" value="GO_Central"/>
</dbReference>
<dbReference type="GO" id="GO:0045893">
    <property type="term" value="P:positive regulation of DNA-templated transcription"/>
    <property type="evidence" value="ECO:0007669"/>
    <property type="project" value="InterPro"/>
</dbReference>
<dbReference type="GO" id="GO:0006357">
    <property type="term" value="P:regulation of transcription by RNA polymerase II"/>
    <property type="evidence" value="ECO:0000318"/>
    <property type="project" value="GO_Central"/>
</dbReference>
<dbReference type="CDD" id="cd20188">
    <property type="entry name" value="T-box_TBX2_3-like"/>
    <property type="match status" value="1"/>
</dbReference>
<dbReference type="FunFam" id="2.60.40.820:FF:000003">
    <property type="entry name" value="T-box transcription factor TBX3"/>
    <property type="match status" value="1"/>
</dbReference>
<dbReference type="Gene3D" id="2.60.40.820">
    <property type="entry name" value="Transcription factor, T-box"/>
    <property type="match status" value="1"/>
</dbReference>
<dbReference type="InterPro" id="IPR008967">
    <property type="entry name" value="p53-like_TF_DNA-bd_sf"/>
</dbReference>
<dbReference type="InterPro" id="IPR046360">
    <property type="entry name" value="T-box_DNA-bd"/>
</dbReference>
<dbReference type="InterPro" id="IPR036960">
    <property type="entry name" value="T-box_sf"/>
</dbReference>
<dbReference type="InterPro" id="IPR022582">
    <property type="entry name" value="TBX2/3_TAD"/>
</dbReference>
<dbReference type="InterPro" id="IPR048387">
    <property type="entry name" value="TBX2_3_RD"/>
</dbReference>
<dbReference type="InterPro" id="IPR002070">
    <property type="entry name" value="TF_Brachyury"/>
</dbReference>
<dbReference type="InterPro" id="IPR001699">
    <property type="entry name" value="TF_T-box"/>
</dbReference>
<dbReference type="InterPro" id="IPR018186">
    <property type="entry name" value="TF_T-box_CS"/>
</dbReference>
<dbReference type="PANTHER" id="PTHR11267">
    <property type="entry name" value="T-BOX PROTEIN-RELATED"/>
    <property type="match status" value="1"/>
</dbReference>
<dbReference type="PANTHER" id="PTHR11267:SF82">
    <property type="entry name" value="T-BOX TRANSCRIPTION FACTOR TBX2"/>
    <property type="match status" value="1"/>
</dbReference>
<dbReference type="Pfam" id="PF00907">
    <property type="entry name" value="T-box"/>
    <property type="match status" value="1"/>
</dbReference>
<dbReference type="Pfam" id="PF20627">
    <property type="entry name" value="TBX2-3_RD"/>
    <property type="match status" value="1"/>
</dbReference>
<dbReference type="Pfam" id="PF12598">
    <property type="entry name" value="TBX2-3_TAD"/>
    <property type="match status" value="1"/>
</dbReference>
<dbReference type="PRINTS" id="PR00938">
    <property type="entry name" value="BRACHYURY"/>
</dbReference>
<dbReference type="PRINTS" id="PR00937">
    <property type="entry name" value="TBOX"/>
</dbReference>
<dbReference type="SMART" id="SM00425">
    <property type="entry name" value="TBOX"/>
    <property type="match status" value="1"/>
</dbReference>
<dbReference type="SUPFAM" id="SSF49417">
    <property type="entry name" value="p53-like transcription factors"/>
    <property type="match status" value="1"/>
</dbReference>
<dbReference type="PROSITE" id="PS01283">
    <property type="entry name" value="TBOX_1"/>
    <property type="match status" value="1"/>
</dbReference>
<dbReference type="PROSITE" id="PS01264">
    <property type="entry name" value="TBOX_2"/>
    <property type="match status" value="1"/>
</dbReference>
<dbReference type="PROSITE" id="PS50252">
    <property type="entry name" value="TBOX_3"/>
    <property type="match status" value="1"/>
</dbReference>
<feature type="chain" id="PRO_0000262465" description="T-box transcription factor TBX2-B">
    <location>
        <begin position="1"/>
        <end position="691"/>
    </location>
</feature>
<feature type="DNA-binding region" description="T-box" evidence="4">
    <location>
        <begin position="104"/>
        <end position="277"/>
    </location>
</feature>
<feature type="region of interest" description="Disordered" evidence="5">
    <location>
        <begin position="301"/>
        <end position="440"/>
    </location>
</feature>
<feature type="region of interest" description="Disordered" evidence="5">
    <location>
        <begin position="612"/>
        <end position="691"/>
    </location>
</feature>
<feature type="coiled-coil region" evidence="3">
    <location>
        <begin position="659"/>
        <end position="684"/>
    </location>
</feature>
<feature type="compositionally biased region" description="Low complexity" evidence="5">
    <location>
        <begin position="325"/>
        <end position="335"/>
    </location>
</feature>
<feature type="compositionally biased region" description="Basic and acidic residues" evidence="5">
    <location>
        <begin position="340"/>
        <end position="361"/>
    </location>
</feature>
<feature type="compositionally biased region" description="Basic and acidic residues" evidence="5">
    <location>
        <begin position="378"/>
        <end position="402"/>
    </location>
</feature>
<feature type="compositionally biased region" description="Basic and acidic residues" evidence="5">
    <location>
        <begin position="415"/>
        <end position="433"/>
    </location>
</feature>
<feature type="compositionally biased region" description="Low complexity" evidence="5">
    <location>
        <begin position="624"/>
        <end position="639"/>
    </location>
</feature>
<feature type="compositionally biased region" description="Basic and acidic residues" evidence="5">
    <location>
        <begin position="678"/>
        <end position="691"/>
    </location>
</feature>
<sequence length="691" mass="75565">MRDPAFPGAAMAYHPFHAPRPADFPMSAFLAAAQPSFFPALTLPPAALGKPLSDPSLAGAAEAGLHLSALGHHHQAAHLRSLKSLEPEEEVDDDPKVNLEAKELWDQFHKIGTEMVITKSGRRMFPPFKVRVSGLDKKAKYILLMDIVAADDCRYKFHNSRWMVAGKADPEMPKRMYIHPDSPATGEQWMAKPVAFHKLKLTNNISDKHGFTILNSMHKYQPRFHIVRANDILKLPYSTFRTYVFPETDFIAVTAYQNDKITQLKIDHNPFAKGFRDTGNGRREKRKQLSLPSLRMYEEQCKADRDGAESDASSCDPAPGRDSLHSPLSAAPSPLRLHRTNREEKFGADSDQELDRREVRSARGHSPVGHRSPPSSPRLEDRGKDKSTPEKKSDSPESRKDGGSGGDSLFNSIRSLEKDKVESRRKEDSKSDPECGSLSKETYSPLMVQTESPPHLSASHLQSLAFSGLHGQQFFNPLNAGQPLFFHPGQFTMGPGAFSAMGMGHLLASMTGAGALDNGSLSSVQGASGAATPFPFHLSQHMLASQGIPMPAFGGLFPYPYTYMAAAAAAASAMPATSAATTMPRNPFLSSTRPRLRFNPYQIPVGIPPCSNLLTTGMPGSINPGSESSKPGSSRESSPIPDTPGHKRSHSKSLSPKASMKDSINELQRIQRLVSGLERQREVSPGRESPK</sequence>
<reference key="1">
    <citation type="submission" date="2003-10" db="EMBL/GenBank/DDBJ databases">
        <authorList>
            <consortium name="NIH - Xenopus Gene Collection (XGC) project"/>
        </authorList>
    </citation>
    <scope>NUCLEOTIDE SEQUENCE [LARGE SCALE MRNA]</scope>
    <source>
        <tissue>Embryo</tissue>
    </source>
</reference>
<proteinExistence type="evidence at transcript level"/>
<name>TBX2B_XENLA</name>
<evidence type="ECO:0000250" key="1">
    <source>
        <dbReference type="UniProtKB" id="Q13207"/>
    </source>
</evidence>
<evidence type="ECO:0000250" key="2">
    <source>
        <dbReference type="UniProtKB" id="Q60707"/>
    </source>
</evidence>
<evidence type="ECO:0000255" key="3"/>
<evidence type="ECO:0000255" key="4">
    <source>
        <dbReference type="PROSITE-ProRule" id="PRU00201"/>
    </source>
</evidence>
<evidence type="ECO:0000256" key="5">
    <source>
        <dbReference type="SAM" id="MobiDB-lite"/>
    </source>
</evidence>
<evidence type="ECO:0000305" key="6"/>
<keyword id="KW-0175">Coiled coil</keyword>
<keyword id="KW-0238">DNA-binding</keyword>
<keyword id="KW-0539">Nucleus</keyword>
<keyword id="KW-1185">Reference proteome</keyword>
<keyword id="KW-0804">Transcription</keyword>
<keyword id="KW-0805">Transcription regulation</keyword>
<organism>
    <name type="scientific">Xenopus laevis</name>
    <name type="common">African clawed frog</name>
    <dbReference type="NCBI Taxonomy" id="8355"/>
    <lineage>
        <taxon>Eukaryota</taxon>
        <taxon>Metazoa</taxon>
        <taxon>Chordata</taxon>
        <taxon>Craniata</taxon>
        <taxon>Vertebrata</taxon>
        <taxon>Euteleostomi</taxon>
        <taxon>Amphibia</taxon>
        <taxon>Batrachia</taxon>
        <taxon>Anura</taxon>
        <taxon>Pipoidea</taxon>
        <taxon>Pipidae</taxon>
        <taxon>Xenopodinae</taxon>
        <taxon>Xenopus</taxon>
        <taxon>Xenopus</taxon>
    </lineage>
</organism>
<comment type="function">
    <text evidence="1 2">Transcription factor which acts as a transcriptional repressor (By similarity). May also function as a transcriptional activator (By similarity). Binds to the palindromic T site 5'-TTCACACCTAGGTGTGAA-3' DNA sequence, or a half-site, which are present in the regulatory region of several genes (By similarity).</text>
</comment>
<comment type="subunit">
    <text evidence="1">Binds DNA as a monomer.</text>
</comment>
<comment type="subcellular location">
    <subcellularLocation>
        <location evidence="1">Nucleus</location>
    </subcellularLocation>
</comment>
<comment type="domain">
    <text evidence="1">Repression domain 1 (RD1) is involved in transcriptional repression.</text>
</comment>
<comment type="sequence caution" evidence="6">
    <conflict type="erroneous initiation">
        <sequence resource="EMBL-CDS" id="AAH59285"/>
    </conflict>
    <text>Truncated N-terminus.</text>
</comment>
<protein>
    <recommendedName>
        <fullName>T-box transcription factor TBX2-B</fullName>
        <shortName>T-box protein 2-B</shortName>
    </recommendedName>
</protein>
<accession>Q6PCL0</accession>